<gene>
    <name evidence="7 9" type="primary">Trim62</name>
</gene>
<organism>
    <name type="scientific">Mus musculus</name>
    <name type="common">Mouse</name>
    <dbReference type="NCBI Taxonomy" id="10090"/>
    <lineage>
        <taxon>Eukaryota</taxon>
        <taxon>Metazoa</taxon>
        <taxon>Chordata</taxon>
        <taxon>Craniata</taxon>
        <taxon>Vertebrata</taxon>
        <taxon>Euteleostomi</taxon>
        <taxon>Mammalia</taxon>
        <taxon>Eutheria</taxon>
        <taxon>Euarchontoglires</taxon>
        <taxon>Glires</taxon>
        <taxon>Rodentia</taxon>
        <taxon>Myomorpha</taxon>
        <taxon>Muroidea</taxon>
        <taxon>Muridae</taxon>
        <taxon>Murinae</taxon>
        <taxon>Mus</taxon>
        <taxon>Mus</taxon>
    </lineage>
</organism>
<reference key="1">
    <citation type="journal article" date="2004" name="Genome Res.">
        <title>The status, quality, and expansion of the NIH full-length cDNA project: the Mammalian Gene Collection (MGC).</title>
        <authorList>
            <consortium name="The MGC Project Team"/>
        </authorList>
    </citation>
    <scope>NUCLEOTIDE SEQUENCE [LARGE SCALE MRNA]</scope>
    <source>
        <strain>C57BL/6J</strain>
        <tissue>Embryonic brain</tissue>
    </source>
</reference>
<reference key="2">
    <citation type="journal article" date="2015" name="Immunity">
        <title>Ubiquitin ligase TRIM62 regulates CARD9-mediated anti-fungal immunity and intestinal inflammation.</title>
        <authorList>
            <person name="Cao Z."/>
            <person name="Conway K.L."/>
            <person name="Heath R.J."/>
            <person name="Rush J.S."/>
            <person name="Leshchiner E.S."/>
            <person name="Ramirez-Ortiz Z.G."/>
            <person name="Nedelsky N.B."/>
            <person name="Huang H."/>
            <person name="Ng A."/>
            <person name="Gardet A."/>
            <person name="Cheng S.C."/>
            <person name="Shamji A.F."/>
            <person name="Rioux J.D."/>
            <person name="Wijmenga C."/>
            <person name="Netea M.G."/>
            <person name="Means T.K."/>
            <person name="Daly M.J."/>
            <person name="Xavier R.J."/>
        </authorList>
    </citation>
    <scope>DISRUPTION PHENOTYPE</scope>
</reference>
<comment type="function">
    <text evidence="1">E3 ubiquitin ligase that plays a role in antifungal immunity by mediating 'Lys-27'-linked ubiquitination of CARD9 downstream of C-type lectin receptors; leading to CARD9 activation, followed by activation of NF-kappa-B and MAP kinase p38 pathways (By similarity). E3 ubiquitin ligase activity is dependent on E2 ubiquitin-conjugating enzyme UBE2D2 (By similarity).</text>
</comment>
<comment type="catalytic activity">
    <reaction evidence="1">
        <text>S-ubiquitinyl-[E2 ubiquitin-conjugating enzyme]-L-cysteine + [acceptor protein]-L-lysine = [E2 ubiquitin-conjugating enzyme]-L-cysteine + N(6)-ubiquitinyl-[acceptor protein]-L-lysine.</text>
        <dbReference type="EC" id="2.3.2.27"/>
    </reaction>
</comment>
<comment type="pathway">
    <text evidence="1">Protein modification; protein ubiquitination.</text>
</comment>
<comment type="subunit">
    <text evidence="1">Interacts with the ubiquitin-conjugating enzyme, UBE2D2.</text>
</comment>
<comment type="subcellular location">
    <subcellularLocation>
        <location evidence="1">Cytoplasm</location>
    </subcellularLocation>
</comment>
<comment type="domain">
    <text evidence="1">The RING finger is required for ubiquitin ligase activity.</text>
</comment>
<comment type="PTM">
    <text evidence="1">Polyubiquitinated, autoubiquitinated in the presence of UBE2D2.</text>
</comment>
<comment type="disruption phenotype">
    <text evidence="6">Increased susceptibility to fungal infection.</text>
</comment>
<comment type="similarity">
    <text evidence="8">Belongs to the TRIM/RBCC family.</text>
</comment>
<proteinExistence type="evidence at transcript level"/>
<dbReference type="EC" id="2.3.2.27" evidence="1"/>
<dbReference type="EMBL" id="BC049095">
    <property type="protein sequence ID" value="AAH49095.1"/>
    <property type="molecule type" value="mRNA"/>
</dbReference>
<dbReference type="CCDS" id="CCDS18677.1"/>
<dbReference type="RefSeq" id="NP_835211.1">
    <property type="nucleotide sequence ID" value="NM_178110.3"/>
</dbReference>
<dbReference type="SMR" id="Q80V85"/>
<dbReference type="BioGRID" id="212248">
    <property type="interactions" value="1"/>
</dbReference>
<dbReference type="FunCoup" id="Q80V85">
    <property type="interactions" value="490"/>
</dbReference>
<dbReference type="STRING" id="10090.ENSMUSP00000039121"/>
<dbReference type="iPTMnet" id="Q80V85"/>
<dbReference type="PhosphoSitePlus" id="Q80V85"/>
<dbReference type="PaxDb" id="10090-ENSMUSP00000039121"/>
<dbReference type="ProteomicsDB" id="259094"/>
<dbReference type="Antibodypedia" id="17083">
    <property type="antibodies" value="171 antibodies from 25 providers"/>
</dbReference>
<dbReference type="DNASU" id="67525"/>
<dbReference type="Ensembl" id="ENSMUST00000035667.9">
    <property type="protein sequence ID" value="ENSMUSP00000039121.9"/>
    <property type="gene ID" value="ENSMUSG00000041000.9"/>
</dbReference>
<dbReference type="GeneID" id="67525"/>
<dbReference type="KEGG" id="mmu:67525"/>
<dbReference type="UCSC" id="uc008uvo.1">
    <property type="organism name" value="mouse"/>
</dbReference>
<dbReference type="AGR" id="MGI:1914775"/>
<dbReference type="CTD" id="55223"/>
<dbReference type="MGI" id="MGI:1914775">
    <property type="gene designation" value="Trim62"/>
</dbReference>
<dbReference type="VEuPathDB" id="HostDB:ENSMUSG00000041000"/>
<dbReference type="eggNOG" id="KOG2177">
    <property type="taxonomic scope" value="Eukaryota"/>
</dbReference>
<dbReference type="GeneTree" id="ENSGT00940000158433"/>
<dbReference type="HOGENOM" id="CLU_013137_0_3_1"/>
<dbReference type="InParanoid" id="Q80V85"/>
<dbReference type="OMA" id="TEHWNRQ"/>
<dbReference type="OrthoDB" id="6270329at2759"/>
<dbReference type="PhylomeDB" id="Q80V85"/>
<dbReference type="TreeFam" id="TF342569"/>
<dbReference type="UniPathway" id="UPA00143"/>
<dbReference type="BioGRID-ORCS" id="67525">
    <property type="hits" value="6 hits in 78 CRISPR screens"/>
</dbReference>
<dbReference type="PRO" id="PR:Q80V85"/>
<dbReference type="Proteomes" id="UP000000589">
    <property type="component" value="Chromosome 4"/>
</dbReference>
<dbReference type="RNAct" id="Q80V85">
    <property type="molecule type" value="protein"/>
</dbReference>
<dbReference type="Bgee" id="ENSMUSG00000041000">
    <property type="expression patterns" value="Expressed in cerebellar cortex and 205 other cell types or tissues"/>
</dbReference>
<dbReference type="ExpressionAtlas" id="Q80V85">
    <property type="expression patterns" value="baseline and differential"/>
</dbReference>
<dbReference type="GO" id="GO:0005737">
    <property type="term" value="C:cytoplasm"/>
    <property type="evidence" value="ECO:0000250"/>
    <property type="project" value="UniProtKB"/>
</dbReference>
<dbReference type="GO" id="GO:0042802">
    <property type="term" value="F:identical protein binding"/>
    <property type="evidence" value="ECO:0007669"/>
    <property type="project" value="Ensembl"/>
</dbReference>
<dbReference type="GO" id="GO:0003713">
    <property type="term" value="F:transcription coactivator activity"/>
    <property type="evidence" value="ECO:0007669"/>
    <property type="project" value="Ensembl"/>
</dbReference>
<dbReference type="GO" id="GO:0061630">
    <property type="term" value="F:ubiquitin protein ligase activity"/>
    <property type="evidence" value="ECO:0007669"/>
    <property type="project" value="Ensembl"/>
</dbReference>
<dbReference type="GO" id="GO:0004842">
    <property type="term" value="F:ubiquitin-protein transferase activity"/>
    <property type="evidence" value="ECO:0000250"/>
    <property type="project" value="UniProtKB"/>
</dbReference>
<dbReference type="GO" id="GO:0008270">
    <property type="term" value="F:zinc ion binding"/>
    <property type="evidence" value="ECO:0007669"/>
    <property type="project" value="UniProtKB-KW"/>
</dbReference>
<dbReference type="GO" id="GO:0045087">
    <property type="term" value="P:innate immune response"/>
    <property type="evidence" value="ECO:0007669"/>
    <property type="project" value="UniProtKB-KW"/>
</dbReference>
<dbReference type="GO" id="GO:0010719">
    <property type="term" value="P:negative regulation of epithelial to mesenchymal transition"/>
    <property type="evidence" value="ECO:0000315"/>
    <property type="project" value="MGI"/>
</dbReference>
<dbReference type="GO" id="GO:0032897">
    <property type="term" value="P:negative regulation of viral transcription"/>
    <property type="evidence" value="ECO:0007669"/>
    <property type="project" value="Ensembl"/>
</dbReference>
<dbReference type="GO" id="GO:1905036">
    <property type="term" value="P:positive regulation of antifungal innate immune response"/>
    <property type="evidence" value="ECO:0000315"/>
    <property type="project" value="UniProtKB"/>
</dbReference>
<dbReference type="GO" id="GO:0043123">
    <property type="term" value="P:positive regulation of canonical NF-kappaB signal transduction"/>
    <property type="evidence" value="ECO:0007669"/>
    <property type="project" value="Ensembl"/>
</dbReference>
<dbReference type="GO" id="GO:0044314">
    <property type="term" value="P:protein K27-linked ubiquitination"/>
    <property type="evidence" value="ECO:0000250"/>
    <property type="project" value="UniProtKB"/>
</dbReference>
<dbReference type="GO" id="GO:0046596">
    <property type="term" value="P:regulation of viral entry into host cell"/>
    <property type="evidence" value="ECO:0007669"/>
    <property type="project" value="Ensembl"/>
</dbReference>
<dbReference type="GO" id="GO:0019076">
    <property type="term" value="P:viral release from host cell"/>
    <property type="evidence" value="ECO:0007669"/>
    <property type="project" value="Ensembl"/>
</dbReference>
<dbReference type="CDD" id="cd19792">
    <property type="entry name" value="Bbox2_TRIM62_C-IV"/>
    <property type="match status" value="1"/>
</dbReference>
<dbReference type="CDD" id="cd16608">
    <property type="entry name" value="RING-HC_TRIM62_C-IV"/>
    <property type="match status" value="1"/>
</dbReference>
<dbReference type="CDD" id="cd13744">
    <property type="entry name" value="SPRY_PRY_TRIM62"/>
    <property type="match status" value="1"/>
</dbReference>
<dbReference type="FunFam" id="2.60.120.920:FF:000041">
    <property type="entry name" value="E3 ubiquitin-protein ligase TRIM62"/>
    <property type="match status" value="1"/>
</dbReference>
<dbReference type="FunFam" id="3.30.160.60:FF:001508">
    <property type="entry name" value="E3 ubiquitin-protein ligase TRIM62"/>
    <property type="match status" value="1"/>
</dbReference>
<dbReference type="FunFam" id="3.30.40.10:FF:000389">
    <property type="entry name" value="E3 ubiquitin-protein ligase TRIM62"/>
    <property type="match status" value="1"/>
</dbReference>
<dbReference type="Gene3D" id="2.60.120.920">
    <property type="match status" value="1"/>
</dbReference>
<dbReference type="Gene3D" id="3.30.160.60">
    <property type="entry name" value="Classic Zinc Finger"/>
    <property type="match status" value="1"/>
</dbReference>
<dbReference type="Gene3D" id="3.30.40.10">
    <property type="entry name" value="Zinc/RING finger domain, C3HC4 (zinc finger)"/>
    <property type="match status" value="1"/>
</dbReference>
<dbReference type="InterPro" id="IPR001870">
    <property type="entry name" value="B30.2/SPRY"/>
</dbReference>
<dbReference type="InterPro" id="IPR043136">
    <property type="entry name" value="B30.2/SPRY_sf"/>
</dbReference>
<dbReference type="InterPro" id="IPR003879">
    <property type="entry name" value="Butyrophylin_SPRY"/>
</dbReference>
<dbReference type="InterPro" id="IPR013320">
    <property type="entry name" value="ConA-like_dom_sf"/>
</dbReference>
<dbReference type="InterPro" id="IPR006574">
    <property type="entry name" value="PRY"/>
</dbReference>
<dbReference type="InterPro" id="IPR035830">
    <property type="entry name" value="PRY/SPRY_TRIM62"/>
</dbReference>
<dbReference type="InterPro" id="IPR003877">
    <property type="entry name" value="SPRY_dom"/>
</dbReference>
<dbReference type="InterPro" id="IPR050143">
    <property type="entry name" value="TRIM/RBCC"/>
</dbReference>
<dbReference type="InterPro" id="IPR000315">
    <property type="entry name" value="Znf_B-box"/>
</dbReference>
<dbReference type="InterPro" id="IPR001841">
    <property type="entry name" value="Znf_RING"/>
</dbReference>
<dbReference type="InterPro" id="IPR013083">
    <property type="entry name" value="Znf_RING/FYVE/PHD"/>
</dbReference>
<dbReference type="InterPro" id="IPR017907">
    <property type="entry name" value="Znf_RING_CS"/>
</dbReference>
<dbReference type="PANTHER" id="PTHR24103">
    <property type="entry name" value="E3 UBIQUITIN-PROTEIN LIGASE TRIM"/>
    <property type="match status" value="1"/>
</dbReference>
<dbReference type="Pfam" id="PF13765">
    <property type="entry name" value="PRY"/>
    <property type="match status" value="1"/>
</dbReference>
<dbReference type="Pfam" id="PF00622">
    <property type="entry name" value="SPRY"/>
    <property type="match status" value="1"/>
</dbReference>
<dbReference type="Pfam" id="PF00643">
    <property type="entry name" value="zf-B_box"/>
    <property type="match status" value="1"/>
</dbReference>
<dbReference type="Pfam" id="PF15227">
    <property type="entry name" value="zf-C3HC4_4"/>
    <property type="match status" value="1"/>
</dbReference>
<dbReference type="PRINTS" id="PR01407">
    <property type="entry name" value="BUTYPHLNCDUF"/>
</dbReference>
<dbReference type="SMART" id="SM00589">
    <property type="entry name" value="PRY"/>
    <property type="match status" value="1"/>
</dbReference>
<dbReference type="SMART" id="SM00184">
    <property type="entry name" value="RING"/>
    <property type="match status" value="1"/>
</dbReference>
<dbReference type="SMART" id="SM00449">
    <property type="entry name" value="SPRY"/>
    <property type="match status" value="1"/>
</dbReference>
<dbReference type="SUPFAM" id="SSF57845">
    <property type="entry name" value="B-box zinc-binding domain"/>
    <property type="match status" value="1"/>
</dbReference>
<dbReference type="SUPFAM" id="SSF49899">
    <property type="entry name" value="Concanavalin A-like lectins/glucanases"/>
    <property type="match status" value="1"/>
</dbReference>
<dbReference type="SUPFAM" id="SSF57850">
    <property type="entry name" value="RING/U-box"/>
    <property type="match status" value="1"/>
</dbReference>
<dbReference type="PROSITE" id="PS50188">
    <property type="entry name" value="B302_SPRY"/>
    <property type="match status" value="1"/>
</dbReference>
<dbReference type="PROSITE" id="PS50119">
    <property type="entry name" value="ZF_BBOX"/>
    <property type="match status" value="1"/>
</dbReference>
<dbReference type="PROSITE" id="PS00518">
    <property type="entry name" value="ZF_RING_1"/>
    <property type="match status" value="1"/>
</dbReference>
<dbReference type="PROSITE" id="PS50089">
    <property type="entry name" value="ZF_RING_2"/>
    <property type="match status" value="1"/>
</dbReference>
<name>TRI62_MOUSE</name>
<feature type="chain" id="PRO_0000249575" description="E3 ubiquitin-protein ligase TRIM62">
    <location>
        <begin position="1"/>
        <end position="475"/>
    </location>
</feature>
<feature type="domain" description="B30.2/SPRY" evidence="5">
    <location>
        <begin position="277"/>
        <end position="475"/>
    </location>
</feature>
<feature type="zinc finger region" description="RING-type" evidence="4">
    <location>
        <begin position="11"/>
        <end position="54"/>
    </location>
</feature>
<feature type="zinc finger region" description="B box-type" evidence="3">
    <location>
        <begin position="88"/>
        <end position="128"/>
    </location>
</feature>
<feature type="coiled-coil region" evidence="2">
    <location>
        <begin position="121"/>
        <end position="241"/>
    </location>
</feature>
<feature type="binding site" evidence="3">
    <location>
        <position position="93"/>
    </location>
    <ligand>
        <name>Zn(2+)</name>
        <dbReference type="ChEBI" id="CHEBI:29105"/>
    </ligand>
</feature>
<feature type="binding site" evidence="3">
    <location>
        <position position="96"/>
    </location>
    <ligand>
        <name>Zn(2+)</name>
        <dbReference type="ChEBI" id="CHEBI:29105"/>
    </ligand>
</feature>
<feature type="binding site" evidence="3">
    <location>
        <position position="114"/>
    </location>
    <ligand>
        <name>Zn(2+)</name>
        <dbReference type="ChEBI" id="CHEBI:29105"/>
    </ligand>
</feature>
<feature type="binding site" evidence="3">
    <location>
        <position position="120"/>
    </location>
    <ligand>
        <name>Zn(2+)</name>
        <dbReference type="ChEBI" id="CHEBI:29105"/>
    </ligand>
</feature>
<accession>Q80V85</accession>
<keyword id="KW-0175">Coiled coil</keyword>
<keyword id="KW-0963">Cytoplasm</keyword>
<keyword id="KW-0391">Immunity</keyword>
<keyword id="KW-0399">Innate immunity</keyword>
<keyword id="KW-0479">Metal-binding</keyword>
<keyword id="KW-1185">Reference proteome</keyword>
<keyword id="KW-0808">Transferase</keyword>
<keyword id="KW-0832">Ubl conjugation</keyword>
<keyword id="KW-0833">Ubl conjugation pathway</keyword>
<keyword id="KW-0862">Zinc</keyword>
<keyword id="KW-0863">Zinc-finger</keyword>
<evidence type="ECO:0000250" key="1">
    <source>
        <dbReference type="UniProtKB" id="Q9BVG3"/>
    </source>
</evidence>
<evidence type="ECO:0000255" key="2"/>
<evidence type="ECO:0000255" key="3">
    <source>
        <dbReference type="PROSITE-ProRule" id="PRU00024"/>
    </source>
</evidence>
<evidence type="ECO:0000255" key="4">
    <source>
        <dbReference type="PROSITE-ProRule" id="PRU00175"/>
    </source>
</evidence>
<evidence type="ECO:0000255" key="5">
    <source>
        <dbReference type="PROSITE-ProRule" id="PRU00548"/>
    </source>
</evidence>
<evidence type="ECO:0000269" key="6">
    <source>
    </source>
</evidence>
<evidence type="ECO:0000303" key="7">
    <source>
    </source>
</evidence>
<evidence type="ECO:0000305" key="8"/>
<evidence type="ECO:0000312" key="9">
    <source>
        <dbReference type="MGI" id="MGI:1914775"/>
    </source>
</evidence>
<protein>
    <recommendedName>
        <fullName evidence="8">E3 ubiquitin-protein ligase TRIM62</fullName>
        <ecNumber evidence="1">2.3.2.27</ecNumber>
    </recommendedName>
    <alternativeName>
        <fullName evidence="7">Tripartite motif-containing protein 62</fullName>
    </alternativeName>
</protein>
<sequence length="475" mass="54298">MACSLKDELLCSICLSIYQDPVSLGCEHYFCRRCITEHWVRQEAQGARDCPECRRTFAEPALAPSLKLANIVERYSAFPLDAILNARRAARPCQAHDKVKLFCLTDRALLCFFCDEPALHEQHQVTGIDDAFEELQRELKEQLQALQDSEREHTEALQLLKRQLAETKSSTKSLRTTIGEAFERLHRLLRERQKAMLEELEADTARTLTDIEQKVQRYSQQLRKVQEGAQILQERLAETDRHTFLAGVASLSERLKGKIHETNLTYEDFPTSKYTGPLQYTIWKSLFQDIHPVPAALTMDPGTAHQRLILSDDCTIVAYGNLHPQPLQDSPKRFDVEVSVLGSEAFSSGVHYWEVVVAEKTQWVIGLAHEAASRKGSIQIQPSRGFYCIVMHDGNQYSACTEPWTRLNVRDKLDKVGVFLDYDQGLLIFYNADDMSWLYTFREKFPGKLCSYFSPGQSHANGKNVQPLRINTVRI</sequence>